<keyword id="KW-0687">Ribonucleoprotein</keyword>
<keyword id="KW-0689">Ribosomal protein</keyword>
<protein>
    <recommendedName>
        <fullName evidence="1">Large ribosomal subunit protein bL19</fullName>
    </recommendedName>
    <alternativeName>
        <fullName evidence="2">50S ribosomal protein L19</fullName>
    </alternativeName>
</protein>
<comment type="function">
    <text evidence="1">This protein is located at the 30S-50S ribosomal subunit interface and may play a role in the structure and function of the aminoacyl-tRNA binding site.</text>
</comment>
<comment type="similarity">
    <text evidence="1">Belongs to the bacterial ribosomal protein bL19 family.</text>
</comment>
<dbReference type="EMBL" id="CP000378">
    <property type="protein sequence ID" value="ABF75504.1"/>
    <property type="molecule type" value="Genomic_DNA"/>
</dbReference>
<dbReference type="SMR" id="Q1BY01"/>
<dbReference type="HOGENOM" id="CLU_103507_1_0_4"/>
<dbReference type="GO" id="GO:0022625">
    <property type="term" value="C:cytosolic large ribosomal subunit"/>
    <property type="evidence" value="ECO:0007669"/>
    <property type="project" value="TreeGrafter"/>
</dbReference>
<dbReference type="GO" id="GO:0003735">
    <property type="term" value="F:structural constituent of ribosome"/>
    <property type="evidence" value="ECO:0007669"/>
    <property type="project" value="InterPro"/>
</dbReference>
<dbReference type="GO" id="GO:0006412">
    <property type="term" value="P:translation"/>
    <property type="evidence" value="ECO:0007669"/>
    <property type="project" value="UniProtKB-UniRule"/>
</dbReference>
<dbReference type="FunFam" id="2.30.30.790:FF:000001">
    <property type="entry name" value="50S ribosomal protein L19"/>
    <property type="match status" value="1"/>
</dbReference>
<dbReference type="Gene3D" id="2.30.30.790">
    <property type="match status" value="1"/>
</dbReference>
<dbReference type="HAMAP" id="MF_00402">
    <property type="entry name" value="Ribosomal_bL19"/>
    <property type="match status" value="1"/>
</dbReference>
<dbReference type="InterPro" id="IPR001857">
    <property type="entry name" value="Ribosomal_bL19"/>
</dbReference>
<dbReference type="InterPro" id="IPR018257">
    <property type="entry name" value="Ribosomal_bL19_CS"/>
</dbReference>
<dbReference type="InterPro" id="IPR038657">
    <property type="entry name" value="Ribosomal_bL19_sf"/>
</dbReference>
<dbReference type="InterPro" id="IPR008991">
    <property type="entry name" value="Translation_prot_SH3-like_sf"/>
</dbReference>
<dbReference type="NCBIfam" id="TIGR01024">
    <property type="entry name" value="rplS_bact"/>
    <property type="match status" value="1"/>
</dbReference>
<dbReference type="PANTHER" id="PTHR15680:SF9">
    <property type="entry name" value="LARGE RIBOSOMAL SUBUNIT PROTEIN BL19M"/>
    <property type="match status" value="1"/>
</dbReference>
<dbReference type="PANTHER" id="PTHR15680">
    <property type="entry name" value="RIBOSOMAL PROTEIN L19"/>
    <property type="match status" value="1"/>
</dbReference>
<dbReference type="Pfam" id="PF01245">
    <property type="entry name" value="Ribosomal_L19"/>
    <property type="match status" value="1"/>
</dbReference>
<dbReference type="PIRSF" id="PIRSF002191">
    <property type="entry name" value="Ribosomal_L19"/>
    <property type="match status" value="1"/>
</dbReference>
<dbReference type="PRINTS" id="PR00061">
    <property type="entry name" value="RIBOSOMALL19"/>
</dbReference>
<dbReference type="SUPFAM" id="SSF50104">
    <property type="entry name" value="Translation proteins SH3-like domain"/>
    <property type="match status" value="1"/>
</dbReference>
<dbReference type="PROSITE" id="PS01015">
    <property type="entry name" value="RIBOSOMAL_L19"/>
    <property type="match status" value="1"/>
</dbReference>
<feature type="chain" id="PRO_0000252499" description="Large ribosomal subunit protein bL19">
    <location>
        <begin position="1"/>
        <end position="130"/>
    </location>
</feature>
<proteinExistence type="inferred from homology"/>
<gene>
    <name evidence="1" type="primary">rplS</name>
    <name type="ordered locus">Bcen_0593</name>
</gene>
<sequence length="130" mass="14515">MNLIAKLEQEEIERALAGKTIPDFAPGDTVIVNVNVVEGNRKRVQAYEGVVIAIRNRGLNSNFIVRKISSGEGVERTFQTYSPLLASIVVKRRGDVRRAKLYYLRERSGKSARIKEKLVSKDRAAAASQE</sequence>
<evidence type="ECO:0000255" key="1">
    <source>
        <dbReference type="HAMAP-Rule" id="MF_00402"/>
    </source>
</evidence>
<evidence type="ECO:0000305" key="2"/>
<accession>Q1BY01</accession>
<name>RL19_BURO1</name>
<organism>
    <name type="scientific">Burkholderia orbicola (strain AU 1054)</name>
    <dbReference type="NCBI Taxonomy" id="331271"/>
    <lineage>
        <taxon>Bacteria</taxon>
        <taxon>Pseudomonadati</taxon>
        <taxon>Pseudomonadota</taxon>
        <taxon>Betaproteobacteria</taxon>
        <taxon>Burkholderiales</taxon>
        <taxon>Burkholderiaceae</taxon>
        <taxon>Burkholderia</taxon>
        <taxon>Burkholderia cepacia complex</taxon>
        <taxon>Burkholderia orbicola</taxon>
    </lineage>
</organism>
<reference key="1">
    <citation type="submission" date="2006-05" db="EMBL/GenBank/DDBJ databases">
        <title>Complete sequence of chromosome 1 of Burkholderia cenocepacia AU 1054.</title>
        <authorList>
            <consortium name="US DOE Joint Genome Institute"/>
            <person name="Copeland A."/>
            <person name="Lucas S."/>
            <person name="Lapidus A."/>
            <person name="Barry K."/>
            <person name="Detter J.C."/>
            <person name="Glavina del Rio T."/>
            <person name="Hammon N."/>
            <person name="Israni S."/>
            <person name="Dalin E."/>
            <person name="Tice H."/>
            <person name="Pitluck S."/>
            <person name="Chain P."/>
            <person name="Malfatti S."/>
            <person name="Shin M."/>
            <person name="Vergez L."/>
            <person name="Schmutz J."/>
            <person name="Larimer F."/>
            <person name="Land M."/>
            <person name="Hauser L."/>
            <person name="Kyrpides N."/>
            <person name="Lykidis A."/>
            <person name="LiPuma J.J."/>
            <person name="Konstantinidis K."/>
            <person name="Tiedje J.M."/>
            <person name="Richardson P."/>
        </authorList>
    </citation>
    <scope>NUCLEOTIDE SEQUENCE [LARGE SCALE GENOMIC DNA]</scope>
    <source>
        <strain>AU 1054</strain>
    </source>
</reference>